<accession>Q5E4D5</accession>
<protein>
    <recommendedName>
        <fullName evidence="1">UPF0319 protein VF_1616</fullName>
    </recommendedName>
</protein>
<feature type="signal peptide" evidence="1">
    <location>
        <begin position="1"/>
        <end position="21"/>
    </location>
</feature>
<feature type="chain" id="PRO_1000062251" description="UPF0319 protein VF_1616">
    <location>
        <begin position="22"/>
        <end position="209"/>
    </location>
</feature>
<organism>
    <name type="scientific">Aliivibrio fischeri (strain ATCC 700601 / ES114)</name>
    <name type="common">Vibrio fischeri</name>
    <dbReference type="NCBI Taxonomy" id="312309"/>
    <lineage>
        <taxon>Bacteria</taxon>
        <taxon>Pseudomonadati</taxon>
        <taxon>Pseudomonadota</taxon>
        <taxon>Gammaproteobacteria</taxon>
        <taxon>Vibrionales</taxon>
        <taxon>Vibrionaceae</taxon>
        <taxon>Aliivibrio</taxon>
    </lineage>
</organism>
<proteinExistence type="inferred from homology"/>
<gene>
    <name type="ordered locus">VF_1616</name>
</gene>
<evidence type="ECO:0000255" key="1">
    <source>
        <dbReference type="HAMAP-Rule" id="MF_00789"/>
    </source>
</evidence>
<reference key="1">
    <citation type="journal article" date="2005" name="Proc. Natl. Acad. Sci. U.S.A.">
        <title>Complete genome sequence of Vibrio fischeri: a symbiotic bacterium with pathogenic congeners.</title>
        <authorList>
            <person name="Ruby E.G."/>
            <person name="Urbanowski M."/>
            <person name="Campbell J."/>
            <person name="Dunn A."/>
            <person name="Faini M."/>
            <person name="Gunsalus R."/>
            <person name="Lostroh P."/>
            <person name="Lupp C."/>
            <person name="McCann J."/>
            <person name="Millikan D."/>
            <person name="Schaefer A."/>
            <person name="Stabb E."/>
            <person name="Stevens A."/>
            <person name="Visick K."/>
            <person name="Whistler C."/>
            <person name="Greenberg E.P."/>
        </authorList>
    </citation>
    <scope>NUCLEOTIDE SEQUENCE [LARGE SCALE GENOMIC DNA]</scope>
    <source>
        <strain>ATCC 700601 / ES114</strain>
    </source>
</reference>
<dbReference type="EMBL" id="CP000020">
    <property type="protein sequence ID" value="AAW86111.1"/>
    <property type="molecule type" value="Genomic_DNA"/>
</dbReference>
<dbReference type="RefSeq" id="WP_011262181.1">
    <property type="nucleotide sequence ID" value="NC_006840.2"/>
</dbReference>
<dbReference type="RefSeq" id="YP_204999.1">
    <property type="nucleotide sequence ID" value="NC_006840.2"/>
</dbReference>
<dbReference type="SMR" id="Q5E4D5"/>
<dbReference type="STRING" id="312309.VF_1616"/>
<dbReference type="EnsemblBacteria" id="AAW86111">
    <property type="protein sequence ID" value="AAW86111"/>
    <property type="gene ID" value="VF_1616"/>
</dbReference>
<dbReference type="GeneID" id="54164302"/>
<dbReference type="KEGG" id="vfi:VF_1616"/>
<dbReference type="PATRIC" id="fig|312309.11.peg.1637"/>
<dbReference type="eggNOG" id="COG3110">
    <property type="taxonomic scope" value="Bacteria"/>
</dbReference>
<dbReference type="HOGENOM" id="CLU_073782_1_0_6"/>
<dbReference type="OrthoDB" id="7058190at2"/>
<dbReference type="Proteomes" id="UP000000537">
    <property type="component" value="Chromosome I"/>
</dbReference>
<dbReference type="HAMAP" id="MF_00789">
    <property type="entry name" value="UPF0319"/>
    <property type="match status" value="1"/>
</dbReference>
<dbReference type="InterPro" id="IPR018635">
    <property type="entry name" value="UPF0319"/>
</dbReference>
<dbReference type="PANTHER" id="PTHR38108">
    <property type="entry name" value="UPF0319 PROTEIN YCCT"/>
    <property type="match status" value="1"/>
</dbReference>
<dbReference type="PANTHER" id="PTHR38108:SF1">
    <property type="entry name" value="UPF0319 PROTEIN YCCT"/>
    <property type="match status" value="1"/>
</dbReference>
<dbReference type="Pfam" id="PF09829">
    <property type="entry name" value="DUF2057"/>
    <property type="match status" value="1"/>
</dbReference>
<sequence length="209" mass="23826">MKIQSIFAASFCLLSSISAHAAIQLTVPDEVELILVDNQEVKLESSFFSTTSTLDLENGKHQIVFRYNPVFKQGKDNIIVSSDIIVSTFSAEDKEISFKFPTYNSPEKAKAFNRDLNWELIDKNNNSIPFAQSQLIYNGMQVGRNIQFEVAKFNTTEHPAAFKEGMVTVTHKEIKNEQGDNTAEQMLHYWYEKADQATKERFLKSITNK</sequence>
<keyword id="KW-1185">Reference proteome</keyword>
<keyword id="KW-0732">Signal</keyword>
<name>Y1616_ALIF1</name>
<comment type="similarity">
    <text evidence="1">Belongs to the UPF0319 family.</text>
</comment>